<gene>
    <name evidence="1" type="primary">mqo</name>
    <name type="ordered locus">RHA1_ro06612</name>
</gene>
<feature type="chain" id="PRO_0000325511" description="Probable malate:quinone oxidoreductase">
    <location>
        <begin position="1"/>
        <end position="506"/>
    </location>
</feature>
<comment type="catalytic activity">
    <reaction evidence="1">
        <text>(S)-malate + a quinone = a quinol + oxaloacetate</text>
        <dbReference type="Rhea" id="RHEA:46012"/>
        <dbReference type="ChEBI" id="CHEBI:15589"/>
        <dbReference type="ChEBI" id="CHEBI:16452"/>
        <dbReference type="ChEBI" id="CHEBI:24646"/>
        <dbReference type="ChEBI" id="CHEBI:132124"/>
        <dbReference type="EC" id="1.1.5.4"/>
    </reaction>
</comment>
<comment type="cofactor">
    <cofactor evidence="1">
        <name>FAD</name>
        <dbReference type="ChEBI" id="CHEBI:57692"/>
    </cofactor>
</comment>
<comment type="pathway">
    <text evidence="1">Carbohydrate metabolism; tricarboxylic acid cycle; oxaloacetate from (S)-malate (quinone route): step 1/1.</text>
</comment>
<comment type="similarity">
    <text evidence="1">Belongs to the MQO family.</text>
</comment>
<comment type="sequence caution" evidence="2">
    <conflict type="erroneous initiation">
        <sequence resource="EMBL-CDS" id="ABG98385"/>
    </conflict>
</comment>
<evidence type="ECO:0000255" key="1">
    <source>
        <dbReference type="HAMAP-Rule" id="MF_00212"/>
    </source>
</evidence>
<evidence type="ECO:0000305" key="2"/>
<reference key="1">
    <citation type="journal article" date="2006" name="Proc. Natl. Acad. Sci. U.S.A.">
        <title>The complete genome of Rhodococcus sp. RHA1 provides insights into a catabolic powerhouse.</title>
        <authorList>
            <person name="McLeod M.P."/>
            <person name="Warren R.L."/>
            <person name="Hsiao W.W.L."/>
            <person name="Araki N."/>
            <person name="Myhre M."/>
            <person name="Fernandes C."/>
            <person name="Miyazawa D."/>
            <person name="Wong W."/>
            <person name="Lillquist A.L."/>
            <person name="Wang D."/>
            <person name="Dosanjh M."/>
            <person name="Hara H."/>
            <person name="Petrescu A."/>
            <person name="Morin R.D."/>
            <person name="Yang G."/>
            <person name="Stott J.M."/>
            <person name="Schein J.E."/>
            <person name="Shin H."/>
            <person name="Smailus D."/>
            <person name="Siddiqui A.S."/>
            <person name="Marra M.A."/>
            <person name="Jones S.J.M."/>
            <person name="Holt R."/>
            <person name="Brinkman F.S.L."/>
            <person name="Miyauchi K."/>
            <person name="Fukuda M."/>
            <person name="Davies J.E."/>
            <person name="Mohn W.W."/>
            <person name="Eltis L.D."/>
        </authorList>
    </citation>
    <scope>NUCLEOTIDE SEQUENCE [LARGE SCALE GENOMIC DNA]</scope>
    <source>
        <strain>RHA1</strain>
    </source>
</reference>
<sequence length="506" mass="54325">MSDQNAVETRTDVVLVGAGIMSATLGAILRQVQPDWSITTFERLDAVAAESSDPWNNAGTGHSALCELNYTPQNADGTVDITKAVNVNEQFQVSRQFWAHGVESGVLTQPKEFINPIPHVSFVHGEANAKYLRARYDALAGHPLFAGMEYIDAPDEFTRRLPLMAKGRDFSDPVALNWTQDGTDVDFGALTKQLLGYVGASGGVVHFGHEVTDLTKQSDGSWVVKVTNRRNGVKKVVRAKFVFVGAGGGALHLLQKSGIEEAKGFGGFPVSGAFLRCTNPELIDQHRAKVYGKAAVGAPPMSVPHLDTRVIGNKPGLLFGPYAGWSPKFLKQGRVTDLPSSVKPDNLLSMLGVGVSELGLVKYLISELAMSEAGRIETLREFVPKALGKDWELITAGQRVQVIRRAKGKGGVLEFGTAVVNAADGTIAGLLGASPGASTAVPAMLDVLQRCFPAQYESWKPKLQEMVPSLGVKLSDDTALFSQVWDWTSKVLQLDTSKVEDASVAV</sequence>
<organism>
    <name type="scientific">Rhodococcus jostii (strain RHA1)</name>
    <dbReference type="NCBI Taxonomy" id="101510"/>
    <lineage>
        <taxon>Bacteria</taxon>
        <taxon>Bacillati</taxon>
        <taxon>Actinomycetota</taxon>
        <taxon>Actinomycetes</taxon>
        <taxon>Mycobacteriales</taxon>
        <taxon>Nocardiaceae</taxon>
        <taxon>Rhodococcus</taxon>
    </lineage>
</organism>
<protein>
    <recommendedName>
        <fullName evidence="1">Probable malate:quinone oxidoreductase</fullName>
        <ecNumber evidence="1">1.1.5.4</ecNumber>
    </recommendedName>
    <alternativeName>
        <fullName evidence="1">MQO</fullName>
    </alternativeName>
    <alternativeName>
        <fullName evidence="1">Malate dehydrogenase [quinone]</fullName>
    </alternativeName>
</protein>
<name>MQO_RHOJR</name>
<dbReference type="EC" id="1.1.5.4" evidence="1"/>
<dbReference type="EMBL" id="CP000431">
    <property type="protein sequence ID" value="ABG98385.1"/>
    <property type="status" value="ALT_INIT"/>
    <property type="molecule type" value="Genomic_DNA"/>
</dbReference>
<dbReference type="RefSeq" id="WP_011598452.1">
    <property type="nucleotide sequence ID" value="NC_008268.1"/>
</dbReference>
<dbReference type="SMR" id="Q0S251"/>
<dbReference type="KEGG" id="rha:RHA1_ro06612"/>
<dbReference type="eggNOG" id="COG0579">
    <property type="taxonomic scope" value="Bacteria"/>
</dbReference>
<dbReference type="HOGENOM" id="CLU_028151_0_0_11"/>
<dbReference type="OrthoDB" id="9763983at2"/>
<dbReference type="UniPathway" id="UPA00223">
    <property type="reaction ID" value="UER01008"/>
</dbReference>
<dbReference type="Proteomes" id="UP000008710">
    <property type="component" value="Chromosome"/>
</dbReference>
<dbReference type="GO" id="GO:0047545">
    <property type="term" value="F:2-hydroxyglutarate dehydrogenase activity"/>
    <property type="evidence" value="ECO:0007669"/>
    <property type="project" value="TreeGrafter"/>
</dbReference>
<dbReference type="GO" id="GO:0008924">
    <property type="term" value="F:L-malate dehydrogenase (quinone) activity"/>
    <property type="evidence" value="ECO:0007669"/>
    <property type="project" value="UniProtKB-UniRule"/>
</dbReference>
<dbReference type="GO" id="GO:0006099">
    <property type="term" value="P:tricarboxylic acid cycle"/>
    <property type="evidence" value="ECO:0007669"/>
    <property type="project" value="UniProtKB-UniRule"/>
</dbReference>
<dbReference type="Gene3D" id="3.30.9.10">
    <property type="entry name" value="D-Amino Acid Oxidase, subunit A, domain 2"/>
    <property type="match status" value="1"/>
</dbReference>
<dbReference type="Gene3D" id="3.50.50.60">
    <property type="entry name" value="FAD/NAD(P)-binding domain"/>
    <property type="match status" value="1"/>
</dbReference>
<dbReference type="HAMAP" id="MF_00212">
    <property type="entry name" value="MQO"/>
    <property type="match status" value="1"/>
</dbReference>
<dbReference type="InterPro" id="IPR036188">
    <property type="entry name" value="FAD/NAD-bd_sf"/>
</dbReference>
<dbReference type="InterPro" id="IPR006231">
    <property type="entry name" value="MQO"/>
</dbReference>
<dbReference type="NCBIfam" id="TIGR01320">
    <property type="entry name" value="mal_quin_oxido"/>
    <property type="match status" value="1"/>
</dbReference>
<dbReference type="NCBIfam" id="NF003603">
    <property type="entry name" value="PRK05257.1-1"/>
    <property type="match status" value="1"/>
</dbReference>
<dbReference type="NCBIfam" id="NF003605">
    <property type="entry name" value="PRK05257.1-4"/>
    <property type="match status" value="1"/>
</dbReference>
<dbReference type="NCBIfam" id="NF003606">
    <property type="entry name" value="PRK05257.2-1"/>
    <property type="match status" value="1"/>
</dbReference>
<dbReference type="NCBIfam" id="NF003610">
    <property type="entry name" value="PRK05257.3-1"/>
    <property type="match status" value="1"/>
</dbReference>
<dbReference type="NCBIfam" id="NF003611">
    <property type="entry name" value="PRK05257.3-2"/>
    <property type="match status" value="1"/>
</dbReference>
<dbReference type="NCBIfam" id="NF009875">
    <property type="entry name" value="PRK13339.1"/>
    <property type="match status" value="1"/>
</dbReference>
<dbReference type="PANTHER" id="PTHR43104">
    <property type="entry name" value="L-2-HYDROXYGLUTARATE DEHYDROGENASE, MITOCHONDRIAL"/>
    <property type="match status" value="1"/>
</dbReference>
<dbReference type="PANTHER" id="PTHR43104:SF2">
    <property type="entry name" value="L-2-HYDROXYGLUTARATE DEHYDROGENASE, MITOCHONDRIAL"/>
    <property type="match status" value="1"/>
</dbReference>
<dbReference type="Pfam" id="PF06039">
    <property type="entry name" value="Mqo"/>
    <property type="match status" value="1"/>
</dbReference>
<dbReference type="SUPFAM" id="SSF51905">
    <property type="entry name" value="FAD/NAD(P)-binding domain"/>
    <property type="match status" value="1"/>
</dbReference>
<keyword id="KW-0274">FAD</keyword>
<keyword id="KW-0285">Flavoprotein</keyword>
<keyword id="KW-0560">Oxidoreductase</keyword>
<keyword id="KW-0816">Tricarboxylic acid cycle</keyword>
<proteinExistence type="inferred from homology"/>
<accession>Q0S251</accession>